<name>RLMG_VIBA3</name>
<organism>
    <name type="scientific">Vibrio atlanticus (strain LGP32)</name>
    <name type="common">Vibrio splendidus (strain Mel32)</name>
    <dbReference type="NCBI Taxonomy" id="575788"/>
    <lineage>
        <taxon>Bacteria</taxon>
        <taxon>Pseudomonadati</taxon>
        <taxon>Pseudomonadota</taxon>
        <taxon>Gammaproteobacteria</taxon>
        <taxon>Vibrionales</taxon>
        <taxon>Vibrionaceae</taxon>
        <taxon>Vibrio</taxon>
    </lineage>
</organism>
<accession>B7VKD0</accession>
<keyword id="KW-0963">Cytoplasm</keyword>
<keyword id="KW-0489">Methyltransferase</keyword>
<keyword id="KW-0698">rRNA processing</keyword>
<keyword id="KW-0949">S-adenosyl-L-methionine</keyword>
<keyword id="KW-0808">Transferase</keyword>
<protein>
    <recommendedName>
        <fullName evidence="1">Ribosomal RNA large subunit methyltransferase G</fullName>
        <ecNumber evidence="1">2.1.1.174</ecNumber>
    </recommendedName>
    <alternativeName>
        <fullName evidence="1">23S rRNA m2G1835 methyltransferase</fullName>
    </alternativeName>
    <alternativeName>
        <fullName evidence="1">rRNA (guanine-N(2)-)-methyltransferase RlmG</fullName>
    </alternativeName>
</protein>
<gene>
    <name evidence="1" type="primary">rlmG</name>
    <name type="ordered locus">VS_0691</name>
</gene>
<dbReference type="EC" id="2.1.1.174" evidence="1"/>
<dbReference type="EMBL" id="FM954972">
    <property type="protein sequence ID" value="CAV17685.1"/>
    <property type="molecule type" value="Genomic_DNA"/>
</dbReference>
<dbReference type="SMR" id="B7VKD0"/>
<dbReference type="STRING" id="575788.VS_0691"/>
<dbReference type="KEGG" id="vsp:VS_0691"/>
<dbReference type="PATRIC" id="fig|575788.5.peg.2039"/>
<dbReference type="eggNOG" id="COG2813">
    <property type="taxonomic scope" value="Bacteria"/>
</dbReference>
<dbReference type="HOGENOM" id="CLU_040288_4_0_6"/>
<dbReference type="Proteomes" id="UP000009100">
    <property type="component" value="Chromosome 1"/>
</dbReference>
<dbReference type="GO" id="GO:0005737">
    <property type="term" value="C:cytoplasm"/>
    <property type="evidence" value="ECO:0007669"/>
    <property type="project" value="UniProtKB-SubCell"/>
</dbReference>
<dbReference type="GO" id="GO:0052916">
    <property type="term" value="F:23S rRNA (guanine(1835)-N(2))-methyltransferase activity"/>
    <property type="evidence" value="ECO:0007669"/>
    <property type="project" value="UniProtKB-EC"/>
</dbReference>
<dbReference type="CDD" id="cd02440">
    <property type="entry name" value="AdoMet_MTases"/>
    <property type="match status" value="1"/>
</dbReference>
<dbReference type="Gene3D" id="3.40.50.150">
    <property type="entry name" value="Vaccinia Virus protein VP39"/>
    <property type="match status" value="2"/>
</dbReference>
<dbReference type="HAMAP" id="MF_01859">
    <property type="entry name" value="23SrRNA_methyltr_G"/>
    <property type="match status" value="1"/>
</dbReference>
<dbReference type="InterPro" id="IPR017237">
    <property type="entry name" value="rRNA_m2G-MeTrfase_RlmG"/>
</dbReference>
<dbReference type="InterPro" id="IPR046977">
    <property type="entry name" value="RsmC/RlmG"/>
</dbReference>
<dbReference type="InterPro" id="IPR029063">
    <property type="entry name" value="SAM-dependent_MTases_sf"/>
</dbReference>
<dbReference type="InterPro" id="IPR007848">
    <property type="entry name" value="Small_mtfrase_dom"/>
</dbReference>
<dbReference type="PANTHER" id="PTHR47816:SF5">
    <property type="entry name" value="RIBOSOMAL RNA LARGE SUBUNIT METHYLTRANSFERASE G"/>
    <property type="match status" value="1"/>
</dbReference>
<dbReference type="PANTHER" id="PTHR47816">
    <property type="entry name" value="RIBOSOMAL RNA SMALL SUBUNIT METHYLTRANSFERASE C"/>
    <property type="match status" value="1"/>
</dbReference>
<dbReference type="Pfam" id="PF05175">
    <property type="entry name" value="MTS"/>
    <property type="match status" value="1"/>
</dbReference>
<dbReference type="PIRSF" id="PIRSF037565">
    <property type="entry name" value="RRNA_m2G_Mtase_RsmD_prd"/>
    <property type="match status" value="1"/>
</dbReference>
<dbReference type="SUPFAM" id="SSF53335">
    <property type="entry name" value="S-adenosyl-L-methionine-dependent methyltransferases"/>
    <property type="match status" value="1"/>
</dbReference>
<sequence>MKTELTLLDRTLTLHRFPNRSNETLQAWDAGDEYIISHVEEMNLEPGKHILIMNDSFGALSAWFSKDHDVTMMSDSFISHRGALKNLQRNQSNRVNFLNTMDDIPHGIDLVIMQLPKTNRHLVWQLSQLRQALPEGCQVIGVNKVKDIHTSTLNIFEKYLGETKTSLAKKKHRLVFSSPNCQPIQTVEPFVEWDVDGEDIRLKNLPNVYSGEALDQGARYMLEHIPQDPELRHIIDLGCGNGVLSVKAGQLNPQARITCVDESFMAVESARQNIKDNLGEEGNFQFIANNCLDGFKKNSTYLVMCNPPFHQQQAITDHIAWQMFCDAKHVLSNGGKLIVIGNRHLGYDVKLARLFGEANVETLELNQKFEILQATREPANFNK</sequence>
<feature type="chain" id="PRO_1000188701" description="Ribosomal RNA large subunit methyltransferase G">
    <location>
        <begin position="1"/>
        <end position="383"/>
    </location>
</feature>
<evidence type="ECO:0000255" key="1">
    <source>
        <dbReference type="HAMAP-Rule" id="MF_01859"/>
    </source>
</evidence>
<reference key="1">
    <citation type="submission" date="2009-02" db="EMBL/GenBank/DDBJ databases">
        <title>Vibrio splendidus str. LGP32 complete genome.</title>
        <authorList>
            <person name="Mazel D."/>
            <person name="Le Roux F."/>
        </authorList>
    </citation>
    <scope>NUCLEOTIDE SEQUENCE [LARGE SCALE GENOMIC DNA]</scope>
    <source>
        <strain>LGP32</strain>
    </source>
</reference>
<proteinExistence type="inferred from homology"/>
<comment type="function">
    <text evidence="1">Specifically methylates the guanine in position 1835 (m2G1835) of 23S rRNA.</text>
</comment>
<comment type="catalytic activity">
    <reaction evidence="1">
        <text>guanosine(1835) in 23S rRNA + S-adenosyl-L-methionine = N(2)-methylguanosine(1835) in 23S rRNA + S-adenosyl-L-homocysteine + H(+)</text>
        <dbReference type="Rhea" id="RHEA:42744"/>
        <dbReference type="Rhea" id="RHEA-COMP:10217"/>
        <dbReference type="Rhea" id="RHEA-COMP:10218"/>
        <dbReference type="ChEBI" id="CHEBI:15378"/>
        <dbReference type="ChEBI" id="CHEBI:57856"/>
        <dbReference type="ChEBI" id="CHEBI:59789"/>
        <dbReference type="ChEBI" id="CHEBI:74269"/>
        <dbReference type="ChEBI" id="CHEBI:74481"/>
        <dbReference type="EC" id="2.1.1.174"/>
    </reaction>
</comment>
<comment type="subcellular location">
    <subcellularLocation>
        <location evidence="1">Cytoplasm</location>
    </subcellularLocation>
</comment>
<comment type="similarity">
    <text evidence="1">Belongs to the methyltransferase superfamily. RlmG family.</text>
</comment>